<dbReference type="EC" id="1.14.11.9" evidence="2"/>
<dbReference type="EMBL" id="MK562523">
    <property type="protein sequence ID" value="QCF41218.1"/>
    <property type="molecule type" value="mRNA"/>
</dbReference>
<dbReference type="SMR" id="A0A4D6Q4T7"/>
<dbReference type="GO" id="GO:0045486">
    <property type="term" value="F:flavanone 3-dioxygenase activity"/>
    <property type="evidence" value="ECO:0007669"/>
    <property type="project" value="UniProtKB-EC"/>
</dbReference>
<dbReference type="GO" id="GO:0031418">
    <property type="term" value="F:L-ascorbic acid binding"/>
    <property type="evidence" value="ECO:0007669"/>
    <property type="project" value="UniProtKB-KW"/>
</dbReference>
<dbReference type="GO" id="GO:0046872">
    <property type="term" value="F:metal ion binding"/>
    <property type="evidence" value="ECO:0007669"/>
    <property type="project" value="UniProtKB-KW"/>
</dbReference>
<dbReference type="GO" id="GO:0009813">
    <property type="term" value="P:flavonoid biosynthetic process"/>
    <property type="evidence" value="ECO:0007669"/>
    <property type="project" value="UniProtKB-KW"/>
</dbReference>
<dbReference type="FunFam" id="2.60.120.330:FF:000016">
    <property type="entry name" value="Naringenin,2-oxoglutarate 3-dioxygenase"/>
    <property type="match status" value="1"/>
</dbReference>
<dbReference type="Gene3D" id="2.60.120.330">
    <property type="entry name" value="B-lactam Antibiotic, Isopenicillin N Synthase, Chain"/>
    <property type="match status" value="1"/>
</dbReference>
<dbReference type="InterPro" id="IPR026992">
    <property type="entry name" value="DIOX_N"/>
</dbReference>
<dbReference type="InterPro" id="IPR044861">
    <property type="entry name" value="IPNS-like_FE2OG_OXY"/>
</dbReference>
<dbReference type="InterPro" id="IPR027443">
    <property type="entry name" value="IPNS-like_sf"/>
</dbReference>
<dbReference type="InterPro" id="IPR005123">
    <property type="entry name" value="Oxoglu/Fe-dep_dioxygenase_dom"/>
</dbReference>
<dbReference type="InterPro" id="IPR050295">
    <property type="entry name" value="Plant_2OG-oxidoreductases"/>
</dbReference>
<dbReference type="PANTHER" id="PTHR47991">
    <property type="entry name" value="OXOGLUTARATE/IRON-DEPENDENT DIOXYGENASE"/>
    <property type="match status" value="1"/>
</dbReference>
<dbReference type="Pfam" id="PF03171">
    <property type="entry name" value="2OG-FeII_Oxy"/>
    <property type="match status" value="1"/>
</dbReference>
<dbReference type="Pfam" id="PF14226">
    <property type="entry name" value="DIOX_N"/>
    <property type="match status" value="1"/>
</dbReference>
<dbReference type="SUPFAM" id="SSF51197">
    <property type="entry name" value="Clavaminate synthase-like"/>
    <property type="match status" value="1"/>
</dbReference>
<dbReference type="PROSITE" id="PS51471">
    <property type="entry name" value="FE2OG_OXY"/>
    <property type="match status" value="1"/>
</dbReference>
<name>FL3H2_CROXC</name>
<protein>
    <recommendedName>
        <fullName evidence="4">Flavanone 3-dioxygenase F3H2</fullName>
        <ecNumber evidence="2">1.14.11.9</ecNumber>
    </recommendedName>
    <alternativeName>
        <fullName evidence="3">Flavanone 3'-hydroxylase 2</fullName>
        <shortName evidence="3">CcF3H-2</shortName>
    </alternativeName>
</protein>
<comment type="function">
    <text evidence="2">Catalyzes the 3-beta-hydroxylation of (2S)-flavanones to 2R,3R-dihydroflavonols, which are intermediates in the biosynthesis of flavonols, anthocyanidins, catechins and proanthocyanidins in plants (PubMed:31004005). Can act on naringenin to produce dihydrokaempferol, and on eriodictyol to produced dihydroquercetin (PubMed:31004005).</text>
</comment>
<comment type="catalytic activity">
    <reaction evidence="2">
        <text>a (2S)-flavan-4-one + 2-oxoglutarate + O2 = a (2R,3R)-dihydroflavonol + succinate + CO2</text>
        <dbReference type="Rhea" id="RHEA:18621"/>
        <dbReference type="ChEBI" id="CHEBI:15379"/>
        <dbReference type="ChEBI" id="CHEBI:16526"/>
        <dbReference type="ChEBI" id="CHEBI:16810"/>
        <dbReference type="ChEBI" id="CHEBI:30031"/>
        <dbReference type="ChEBI" id="CHEBI:138188"/>
        <dbReference type="ChEBI" id="CHEBI:140377"/>
        <dbReference type="EC" id="1.14.11.9"/>
    </reaction>
    <physiologicalReaction direction="left-to-right" evidence="2">
        <dbReference type="Rhea" id="RHEA:18622"/>
    </physiologicalReaction>
</comment>
<comment type="catalytic activity">
    <reaction evidence="2">
        <text>(2S)-naringenin + 2-oxoglutarate + O2 = (2R,3R)-dihydrokaempferol + succinate + CO2</text>
        <dbReference type="Rhea" id="RHEA:61084"/>
        <dbReference type="ChEBI" id="CHEBI:15379"/>
        <dbReference type="ChEBI" id="CHEBI:15401"/>
        <dbReference type="ChEBI" id="CHEBI:16526"/>
        <dbReference type="ChEBI" id="CHEBI:16810"/>
        <dbReference type="ChEBI" id="CHEBI:17846"/>
        <dbReference type="ChEBI" id="CHEBI:30031"/>
    </reaction>
    <physiologicalReaction direction="left-to-right" evidence="2">
        <dbReference type="Rhea" id="RHEA:61085"/>
    </physiologicalReaction>
</comment>
<comment type="catalytic activity">
    <reaction evidence="2">
        <text>(S)-eriodictyol + 2-oxoglutarate + O2 = (2R,3R)-dihydroquercetin + succinate + CO2</text>
        <dbReference type="Rhea" id="RHEA:61088"/>
        <dbReference type="ChEBI" id="CHEBI:15379"/>
        <dbReference type="ChEBI" id="CHEBI:16526"/>
        <dbReference type="ChEBI" id="CHEBI:16810"/>
        <dbReference type="ChEBI" id="CHEBI:17948"/>
        <dbReference type="ChEBI" id="CHEBI:28412"/>
        <dbReference type="ChEBI" id="CHEBI:30031"/>
    </reaction>
    <physiologicalReaction direction="left-to-right" evidence="2">
        <dbReference type="Rhea" id="RHEA:61089"/>
    </physiologicalReaction>
</comment>
<comment type="cofactor">
    <cofactor evidence="5">
        <name>L-ascorbate</name>
        <dbReference type="ChEBI" id="CHEBI:38290"/>
    </cofactor>
    <text evidence="5">Binds 1 ascorbate molecule per subunit.</text>
</comment>
<comment type="cofactor">
    <cofactor evidence="1">
        <name>Fe(2+)</name>
        <dbReference type="ChEBI" id="CHEBI:29033"/>
    </cofactor>
    <text evidence="1">Binds 1 Fe(2+) ion per subunit.</text>
</comment>
<comment type="pathway">
    <text evidence="4">Flavonoid metabolism.</text>
</comment>
<comment type="tissue specificity">
    <text evidence="2">Expressed in young cromes.</text>
</comment>
<comment type="similarity">
    <text evidence="4">Belongs to the iron/ascorbate-dependent oxidoreductase family.</text>
</comment>
<organism>
    <name type="scientific">Crocosmia x crocosmiiflora</name>
    <name type="common">Montbretia</name>
    <name type="synonym">Crocosmia aurea x Crocosmia pottsii</name>
    <dbReference type="NCBI Taxonomy" id="1053288"/>
    <lineage>
        <taxon>Eukaryota</taxon>
        <taxon>Viridiplantae</taxon>
        <taxon>Streptophyta</taxon>
        <taxon>Embryophyta</taxon>
        <taxon>Tracheophyta</taxon>
        <taxon>Spermatophyta</taxon>
        <taxon>Magnoliopsida</taxon>
        <taxon>Liliopsida</taxon>
        <taxon>Asparagales</taxon>
        <taxon>Iridaceae</taxon>
        <taxon>Crocoideae</taxon>
        <taxon>Freesieae</taxon>
        <taxon>Crocosmia</taxon>
    </lineage>
</organism>
<keyword id="KW-0223">Dioxygenase</keyword>
<keyword id="KW-0284">Flavonoid biosynthesis</keyword>
<keyword id="KW-0408">Iron</keyword>
<keyword id="KW-0479">Metal-binding</keyword>
<keyword id="KW-0560">Oxidoreductase</keyword>
<keyword id="KW-0847">Vitamin C</keyword>
<sequence>MAPVATATPFLPTISNETTLRQTFVRDEDERPKVAYNVFSSEIPVISLEGIDEVDGRRAEICKKIVAACEDWGVFQVVDHGVDAGLISDMTRLAREFFALPPEDKLRFDMTGGKKGGFIVSSHLQGEAVQDWREIVTYFSYPIRARDYSRWPDKPEDWRSVTKTYSEKLMELACKLLGILSEAMGLDTEALTKACVDMDQKVVVNFYPKCPQPDLTLGLKRHTDPGTITLLLQDQVGGLQATKDGGKTWITVQPVEGAFVVNLGDHGHFLSNGRFKNADHQAVVNSNTSRLSIATFQNPAPDAIVYPLAIREGEKPVLDEPITFAEMYRRKMSRDLELANLKKLAKTENQQVAEKAEVEAVVQPKGLSEILA</sequence>
<proteinExistence type="evidence at protein level"/>
<feature type="chain" id="PRO_0000448072" description="Flavanone 3-dioxygenase F3H2">
    <location>
        <begin position="1"/>
        <end position="372"/>
    </location>
</feature>
<feature type="domain" description="Fe2OG dioxygenase" evidence="1">
    <location>
        <begin position="195"/>
        <end position="299"/>
    </location>
</feature>
<feature type="binding site" evidence="1">
    <location>
        <position position="222"/>
    </location>
    <ligand>
        <name>Fe cation</name>
        <dbReference type="ChEBI" id="CHEBI:24875"/>
    </ligand>
</feature>
<feature type="binding site" evidence="1">
    <location>
        <position position="224"/>
    </location>
    <ligand>
        <name>Fe cation</name>
        <dbReference type="ChEBI" id="CHEBI:24875"/>
    </ligand>
</feature>
<feature type="binding site" evidence="1">
    <location>
        <position position="280"/>
    </location>
    <ligand>
        <name>Fe cation</name>
        <dbReference type="ChEBI" id="CHEBI:24875"/>
    </ligand>
</feature>
<feature type="binding site" evidence="1">
    <location>
        <position position="290"/>
    </location>
    <ligand>
        <name>2-oxoglutarate</name>
        <dbReference type="ChEBI" id="CHEBI:16810"/>
    </ligand>
</feature>
<accession>A0A4D6Q4T7</accession>
<evidence type="ECO:0000255" key="1">
    <source>
        <dbReference type="PROSITE-ProRule" id="PRU00805"/>
    </source>
</evidence>
<evidence type="ECO:0000269" key="2">
    <source>
    </source>
</evidence>
<evidence type="ECO:0000303" key="3">
    <source>
    </source>
</evidence>
<evidence type="ECO:0000305" key="4"/>
<evidence type="ECO:0000305" key="5">
    <source>
    </source>
</evidence>
<reference key="1">
    <citation type="journal article" date="2019" name="Plant Physiol.">
        <title>Flavonol biosynthesis genes and their use in engineering the plant antidiabetic metabolite montbretin A.</title>
        <authorList>
            <person name="Irmisch S."/>
            <person name="Ruebsam H."/>
            <person name="Jancsik S."/>
            <person name="Man Saint Yuen M."/>
            <person name="Madilao L.L."/>
            <person name="Bohlmann J."/>
        </authorList>
    </citation>
    <scope>NUCLEOTIDE SEQUENCE [MRNA]</scope>
    <scope>FUNCTION</scope>
    <scope>CATALYTIC ACTIVITY</scope>
    <scope>COFACTOR</scope>
    <scope>TISSUE SPECIFICITY</scope>
</reference>
<gene>
    <name evidence="3" type="primary">F3H-2</name>
</gene>